<sequence>MSTEREAKVYVNGSLVGTHENPEELAEQIREARRRGEVSEMVNVSVRDRTGEVIVNADAGRARRPLLVVENGEPVVTQEEVEAVKNGDIDFEDLVEAGKVEFIDAEEEEDILVGVEEEELTTDHTHLEIDPQLIFGIGAGMIPYPEHNASPRITMGAGMMKQSLGLPAANYRIRPDTRQHLLHYPQKAMVNTQTTEQIGYDDRPAGQNFVVAVMSYEGFNIEDALVMNKGSVERALSRSHFFRTYEGEERRYPGGQEDRFEIPGDDVRGARGEDAYTHLDDDGLVNPETKVDDSSVLLGKTSPPRFLEEPEDMGGLSPQKRRETSVTMRSGEDGVVDTVTLMEGEDGSKLAKVSVRDERIPELGDKFASRHGQKGVVGHLAPQEDMPFTQEGVVPDLVLNPHALPSRMTVGHVLEMLGGKAGSLDGRSVDGTPFTGEGEDEIRGTLEDRGFKSSGKEVMYSGVSGEKIEAEIFVGTIFYHKLYHMVSNKLHARSKGPVQVLTRQPTEGRAREGGLRVGEMERDTVIGHGAAMVLKERLLDSSDREEIHVCGNCGMTAVENYEQRRVYCPNCEEETDVHSIEMSYAFKLLLDEMKALGIAPRLELEEAV</sequence>
<proteinExistence type="inferred from homology"/>
<feature type="initiator methionine" description="Removed" evidence="1">
    <location>
        <position position="1"/>
    </location>
</feature>
<feature type="chain" id="PRO_0000048101" description="DNA-directed RNA polymerase subunit Rpo2C">
    <location>
        <begin position="2"/>
        <end position="608"/>
    </location>
</feature>
<feature type="region of interest" description="Disordered" evidence="4">
    <location>
        <begin position="278"/>
        <end position="326"/>
    </location>
</feature>
<feature type="binding site" evidence="2">
    <location>
        <position position="550"/>
    </location>
    <ligand>
        <name>Zn(2+)</name>
        <dbReference type="ChEBI" id="CHEBI:29105"/>
    </ligand>
</feature>
<feature type="binding site" evidence="2">
    <location>
        <position position="553"/>
    </location>
    <ligand>
        <name>Zn(2+)</name>
        <dbReference type="ChEBI" id="CHEBI:29105"/>
    </ligand>
</feature>
<feature type="binding site" evidence="2">
    <location>
        <position position="568"/>
    </location>
    <ligand>
        <name>Zn(2+)</name>
        <dbReference type="ChEBI" id="CHEBI:29105"/>
    </ligand>
</feature>
<feature type="binding site" evidence="6">
    <location>
        <position position="571"/>
    </location>
    <ligand>
        <name>Zn(2+)</name>
        <dbReference type="ChEBI" id="CHEBI:29105"/>
    </ligand>
</feature>
<evidence type="ECO:0000250" key="1"/>
<evidence type="ECO:0000250" key="2">
    <source>
        <dbReference type="UniProtKB" id="B8YB55"/>
    </source>
</evidence>
<evidence type="ECO:0000250" key="3">
    <source>
        <dbReference type="UniProtKB" id="P11513"/>
    </source>
</evidence>
<evidence type="ECO:0000256" key="4">
    <source>
        <dbReference type="SAM" id="MobiDB-lite"/>
    </source>
</evidence>
<evidence type="ECO:0000303" key="5">
    <source>
    </source>
</evidence>
<evidence type="ECO:0000305" key="6"/>
<keyword id="KW-0963">Cytoplasm</keyword>
<keyword id="KW-0238">DNA-binding</keyword>
<keyword id="KW-0240">DNA-directed RNA polymerase</keyword>
<keyword id="KW-0479">Metal-binding</keyword>
<keyword id="KW-0548">Nucleotidyltransferase</keyword>
<keyword id="KW-1185">Reference proteome</keyword>
<keyword id="KW-0804">Transcription</keyword>
<keyword id="KW-0808">Transferase</keyword>
<keyword id="KW-0862">Zinc</keyword>
<name>RPO2C_HALSA</name>
<protein>
    <recommendedName>
        <fullName evidence="6">DNA-directed RNA polymerase subunit Rpo2C</fullName>
        <ecNumber evidence="3">2.7.7.6</ecNumber>
    </recommendedName>
    <alternativeName>
        <fullName evidence="5">DNA-directed RNA polymerase subunit B'</fullName>
    </alternativeName>
</protein>
<accession>P0CX03</accession>
<accession>P15351</accession>
<accession>Q9HM78</accession>
<organism>
    <name type="scientific">Halobacterium salinarum (strain ATCC 700922 / JCM 11081 / NRC-1)</name>
    <name type="common">Halobacterium halobium</name>
    <dbReference type="NCBI Taxonomy" id="64091"/>
    <lineage>
        <taxon>Archaea</taxon>
        <taxon>Methanobacteriati</taxon>
        <taxon>Methanobacteriota</taxon>
        <taxon>Stenosarchaea group</taxon>
        <taxon>Halobacteria</taxon>
        <taxon>Halobacteriales</taxon>
        <taxon>Halobacteriaceae</taxon>
        <taxon>Halobacterium</taxon>
        <taxon>Halobacterium salinarum NRC-34001</taxon>
    </lineage>
</organism>
<gene>
    <name evidence="6" type="primary">rpo2C</name>
    <name evidence="5" type="synonym">rpoB'</name>
    <name type="synonym">rpoB1</name>
    <name type="ordered locus">VNG_2665G</name>
</gene>
<reference key="1">
    <citation type="journal article" date="2000" name="Proc. Natl. Acad. Sci. U.S.A.">
        <title>Genome sequence of Halobacterium species NRC-1.</title>
        <authorList>
            <person name="Ng W.V."/>
            <person name="Kennedy S.P."/>
            <person name="Mahairas G.G."/>
            <person name="Berquist B."/>
            <person name="Pan M."/>
            <person name="Shukla H.D."/>
            <person name="Lasky S.R."/>
            <person name="Baliga N.S."/>
            <person name="Thorsson V."/>
            <person name="Sbrogna J."/>
            <person name="Swartzell S."/>
            <person name="Weir D."/>
            <person name="Hall J."/>
            <person name="Dahl T.A."/>
            <person name="Welti R."/>
            <person name="Goo Y.A."/>
            <person name="Leithauser B."/>
            <person name="Keller K."/>
            <person name="Cruz R."/>
            <person name="Danson M.J."/>
            <person name="Hough D.W."/>
            <person name="Maddocks D.G."/>
            <person name="Jablonski P.E."/>
            <person name="Krebs M.P."/>
            <person name="Angevine C.M."/>
            <person name="Dale H."/>
            <person name="Isenbarger T.A."/>
            <person name="Peck R.F."/>
            <person name="Pohlschroder M."/>
            <person name="Spudich J.L."/>
            <person name="Jung K.-H."/>
            <person name="Alam M."/>
            <person name="Freitas T."/>
            <person name="Hou S."/>
            <person name="Daniels C.J."/>
            <person name="Dennis P.P."/>
            <person name="Omer A.D."/>
            <person name="Ebhardt H."/>
            <person name="Lowe T.M."/>
            <person name="Liang P."/>
            <person name="Riley M."/>
            <person name="Hood L."/>
            <person name="DasSarma S."/>
        </authorList>
    </citation>
    <scope>NUCLEOTIDE SEQUENCE [LARGE SCALE GENOMIC DNA]</scope>
    <source>
        <strain>ATCC 700922 / JCM 11081 / NRC-1</strain>
    </source>
</reference>
<dbReference type="EC" id="2.7.7.6" evidence="3"/>
<dbReference type="EMBL" id="AE004437">
    <property type="protein sequence ID" value="AAG20693.1"/>
    <property type="molecule type" value="Genomic_DNA"/>
</dbReference>
<dbReference type="PIR" id="A84416">
    <property type="entry name" value="A84416"/>
</dbReference>
<dbReference type="SMR" id="P0CX03"/>
<dbReference type="FunCoup" id="P0CX03">
    <property type="interactions" value="80"/>
</dbReference>
<dbReference type="STRING" id="64091.VNG_2665G"/>
<dbReference type="PaxDb" id="64091-VNG_2665G"/>
<dbReference type="KEGG" id="hal:VNG_2665G"/>
<dbReference type="PATRIC" id="fig|64091.14.peg.2070"/>
<dbReference type="HOGENOM" id="CLU_000524_2_2_2"/>
<dbReference type="InParanoid" id="P0CX03"/>
<dbReference type="OrthoDB" id="6009at2157"/>
<dbReference type="PhylomeDB" id="P0CX03"/>
<dbReference type="Proteomes" id="UP000000554">
    <property type="component" value="Chromosome"/>
</dbReference>
<dbReference type="GO" id="GO:0005737">
    <property type="term" value="C:cytoplasm"/>
    <property type="evidence" value="ECO:0007669"/>
    <property type="project" value="UniProtKB-SubCell"/>
</dbReference>
<dbReference type="GO" id="GO:0000428">
    <property type="term" value="C:DNA-directed RNA polymerase complex"/>
    <property type="evidence" value="ECO:0007669"/>
    <property type="project" value="UniProtKB-KW"/>
</dbReference>
<dbReference type="GO" id="GO:0003677">
    <property type="term" value="F:DNA binding"/>
    <property type="evidence" value="ECO:0007669"/>
    <property type="project" value="UniProtKB-KW"/>
</dbReference>
<dbReference type="GO" id="GO:0003899">
    <property type="term" value="F:DNA-directed RNA polymerase activity"/>
    <property type="evidence" value="ECO:0007669"/>
    <property type="project" value="UniProtKB-EC"/>
</dbReference>
<dbReference type="GO" id="GO:0032549">
    <property type="term" value="F:ribonucleoside binding"/>
    <property type="evidence" value="ECO:0007669"/>
    <property type="project" value="InterPro"/>
</dbReference>
<dbReference type="GO" id="GO:0008270">
    <property type="term" value="F:zinc ion binding"/>
    <property type="evidence" value="ECO:0007669"/>
    <property type="project" value="InterPro"/>
</dbReference>
<dbReference type="GO" id="GO:0006351">
    <property type="term" value="P:DNA-templated transcription"/>
    <property type="evidence" value="ECO:0007669"/>
    <property type="project" value="InterPro"/>
</dbReference>
<dbReference type="CDD" id="cd00653">
    <property type="entry name" value="RNA_pol_B_RPB2"/>
    <property type="match status" value="1"/>
</dbReference>
<dbReference type="FunFam" id="2.40.270.10:FF:000011">
    <property type="entry name" value="DNA-directed RNA polymerase subunit beta"/>
    <property type="match status" value="1"/>
</dbReference>
<dbReference type="FunFam" id="3.90.1800.10:FF:000002">
    <property type="entry name" value="DNA-directed RNA polymerase subunit beta"/>
    <property type="match status" value="1"/>
</dbReference>
<dbReference type="Gene3D" id="2.40.50.150">
    <property type="match status" value="1"/>
</dbReference>
<dbReference type="Gene3D" id="3.90.1070.20">
    <property type="match status" value="1"/>
</dbReference>
<dbReference type="Gene3D" id="2.40.270.10">
    <property type="entry name" value="DNA-directed RNA polymerase, subunit 2, domain 6"/>
    <property type="match status" value="1"/>
</dbReference>
<dbReference type="Gene3D" id="3.90.1800.10">
    <property type="entry name" value="RNA polymerase alpha subunit dimerisation domain"/>
    <property type="match status" value="1"/>
</dbReference>
<dbReference type="InterPro" id="IPR015712">
    <property type="entry name" value="DNA-dir_RNA_pol_su2"/>
</dbReference>
<dbReference type="InterPro" id="IPR007120">
    <property type="entry name" value="DNA-dir_RNAP_su2_dom"/>
</dbReference>
<dbReference type="InterPro" id="IPR037033">
    <property type="entry name" value="DNA-dir_RNAP_su2_hyb_sf"/>
</dbReference>
<dbReference type="InterPro" id="IPR007121">
    <property type="entry name" value="RNA_pol_bsu_CS"/>
</dbReference>
<dbReference type="InterPro" id="IPR007646">
    <property type="entry name" value="RNA_pol_Rpb2_4"/>
</dbReference>
<dbReference type="InterPro" id="IPR007641">
    <property type="entry name" value="RNA_pol_Rpb2_7"/>
</dbReference>
<dbReference type="InterPro" id="IPR014724">
    <property type="entry name" value="RNA_pol_RPB2_OB-fold"/>
</dbReference>
<dbReference type="InterPro" id="IPR019969">
    <property type="entry name" value="RNAP_Rpo2"/>
</dbReference>
<dbReference type="NCBIfam" id="TIGR03670">
    <property type="entry name" value="rpoB_arch"/>
    <property type="match status" value="1"/>
</dbReference>
<dbReference type="PANTHER" id="PTHR20856">
    <property type="entry name" value="DNA-DIRECTED RNA POLYMERASE I SUBUNIT 2"/>
    <property type="match status" value="1"/>
</dbReference>
<dbReference type="Pfam" id="PF04566">
    <property type="entry name" value="RNA_pol_Rpb2_4"/>
    <property type="match status" value="1"/>
</dbReference>
<dbReference type="Pfam" id="PF00562">
    <property type="entry name" value="RNA_pol_Rpb2_6"/>
    <property type="match status" value="1"/>
</dbReference>
<dbReference type="Pfam" id="PF04560">
    <property type="entry name" value="RNA_pol_Rpb2_7"/>
    <property type="match status" value="1"/>
</dbReference>
<dbReference type="SUPFAM" id="SSF64484">
    <property type="entry name" value="beta and beta-prime subunits of DNA dependent RNA-polymerase"/>
    <property type="match status" value="1"/>
</dbReference>
<dbReference type="PROSITE" id="PS01166">
    <property type="entry name" value="RNA_POL_BETA"/>
    <property type="match status" value="1"/>
</dbReference>
<comment type="function">
    <text evidence="2">DNA-dependent RNA polymerase (RNAP) catalyzes the transcription of DNA into RNA using the four ribonucleoside triphosphates as substrates. The Rpo2 subunit (Rpo2N and Rpo2C in this organism) is implicated in DNA promoter recognition and in nucleotide binding.</text>
</comment>
<comment type="catalytic activity">
    <reaction evidence="3">
        <text>RNA(n) + a ribonucleoside 5'-triphosphate = RNA(n+1) + diphosphate</text>
        <dbReference type="Rhea" id="RHEA:21248"/>
        <dbReference type="Rhea" id="RHEA-COMP:14527"/>
        <dbReference type="Rhea" id="RHEA-COMP:17342"/>
        <dbReference type="ChEBI" id="CHEBI:33019"/>
        <dbReference type="ChEBI" id="CHEBI:61557"/>
        <dbReference type="ChEBI" id="CHEBI:140395"/>
        <dbReference type="EC" id="2.7.7.6"/>
    </reaction>
</comment>
<comment type="cofactor">
    <cofactor evidence="2">
        <name>Zn(2+)</name>
        <dbReference type="ChEBI" id="CHEBI:29105"/>
    </cofactor>
    <text evidence="2">Binds 1 Zn(2+) per subunit.</text>
</comment>
<comment type="subunit">
    <text evidence="2">Part of the RNA polymerase complex.</text>
</comment>
<comment type="subcellular location">
    <subcellularLocation>
        <location evidence="2">Cytoplasm</location>
    </subcellularLocation>
</comment>
<comment type="similarity">
    <text evidence="6">Belongs to the RNA polymerase beta chain family.</text>
</comment>